<feature type="chain" id="PRO_1000119167" description="Deoxyribose-phosphate aldolase">
    <location>
        <begin position="1"/>
        <end position="223"/>
    </location>
</feature>
<feature type="active site" description="Proton donor/acceptor" evidence="1">
    <location>
        <position position="89"/>
    </location>
</feature>
<feature type="active site" description="Schiff-base intermediate with acetaldehyde" evidence="1">
    <location>
        <position position="152"/>
    </location>
</feature>
<feature type="active site" description="Proton donor/acceptor" evidence="1">
    <location>
        <position position="181"/>
    </location>
</feature>
<accession>C3P786</accession>
<evidence type="ECO:0000255" key="1">
    <source>
        <dbReference type="HAMAP-Rule" id="MF_00114"/>
    </source>
</evidence>
<keyword id="KW-0963">Cytoplasm</keyword>
<keyword id="KW-0456">Lyase</keyword>
<keyword id="KW-0704">Schiff base</keyword>
<name>DEOC_BACAA</name>
<reference key="1">
    <citation type="submission" date="2009-04" db="EMBL/GenBank/DDBJ databases">
        <title>Genome sequence of Bacillus anthracis A0248.</title>
        <authorList>
            <person name="Dodson R.J."/>
            <person name="Munk A.C."/>
            <person name="Bruce D."/>
            <person name="Detter C."/>
            <person name="Tapia R."/>
            <person name="Sutton G."/>
            <person name="Sims D."/>
            <person name="Brettin T."/>
        </authorList>
    </citation>
    <scope>NUCLEOTIDE SEQUENCE [LARGE SCALE GENOMIC DNA]</scope>
    <source>
        <strain>A0248</strain>
    </source>
</reference>
<dbReference type="EC" id="4.1.2.4" evidence="1"/>
<dbReference type="EMBL" id="CP001598">
    <property type="protein sequence ID" value="ACQ46224.1"/>
    <property type="molecule type" value="Genomic_DNA"/>
</dbReference>
<dbReference type="RefSeq" id="WP_001017446.1">
    <property type="nucleotide sequence ID" value="NC_012659.1"/>
</dbReference>
<dbReference type="SMR" id="C3P786"/>
<dbReference type="GeneID" id="45021821"/>
<dbReference type="KEGG" id="bai:BAA_1960"/>
<dbReference type="HOGENOM" id="CLU_053595_0_1_9"/>
<dbReference type="UniPathway" id="UPA00002">
    <property type="reaction ID" value="UER00468"/>
</dbReference>
<dbReference type="GO" id="GO:0005737">
    <property type="term" value="C:cytoplasm"/>
    <property type="evidence" value="ECO:0007669"/>
    <property type="project" value="UniProtKB-SubCell"/>
</dbReference>
<dbReference type="GO" id="GO:0004139">
    <property type="term" value="F:deoxyribose-phosphate aldolase activity"/>
    <property type="evidence" value="ECO:0007669"/>
    <property type="project" value="UniProtKB-UniRule"/>
</dbReference>
<dbReference type="GO" id="GO:0006018">
    <property type="term" value="P:2-deoxyribose 1-phosphate catabolic process"/>
    <property type="evidence" value="ECO:0007669"/>
    <property type="project" value="UniProtKB-UniRule"/>
</dbReference>
<dbReference type="GO" id="GO:0016052">
    <property type="term" value="P:carbohydrate catabolic process"/>
    <property type="evidence" value="ECO:0007669"/>
    <property type="project" value="TreeGrafter"/>
</dbReference>
<dbReference type="GO" id="GO:0009264">
    <property type="term" value="P:deoxyribonucleotide catabolic process"/>
    <property type="evidence" value="ECO:0007669"/>
    <property type="project" value="InterPro"/>
</dbReference>
<dbReference type="CDD" id="cd00959">
    <property type="entry name" value="DeoC"/>
    <property type="match status" value="1"/>
</dbReference>
<dbReference type="FunFam" id="3.20.20.70:FF:000044">
    <property type="entry name" value="Deoxyribose-phosphate aldolase"/>
    <property type="match status" value="1"/>
</dbReference>
<dbReference type="Gene3D" id="3.20.20.70">
    <property type="entry name" value="Aldolase class I"/>
    <property type="match status" value="1"/>
</dbReference>
<dbReference type="HAMAP" id="MF_00114">
    <property type="entry name" value="DeoC_type1"/>
    <property type="match status" value="1"/>
</dbReference>
<dbReference type="InterPro" id="IPR013785">
    <property type="entry name" value="Aldolase_TIM"/>
</dbReference>
<dbReference type="InterPro" id="IPR011343">
    <property type="entry name" value="DeoC"/>
</dbReference>
<dbReference type="InterPro" id="IPR002915">
    <property type="entry name" value="DeoC/FbaB/LacD_aldolase"/>
</dbReference>
<dbReference type="InterPro" id="IPR028581">
    <property type="entry name" value="DeoC_typeI"/>
</dbReference>
<dbReference type="NCBIfam" id="TIGR00126">
    <property type="entry name" value="deoC"/>
    <property type="match status" value="1"/>
</dbReference>
<dbReference type="PANTHER" id="PTHR10889">
    <property type="entry name" value="DEOXYRIBOSE-PHOSPHATE ALDOLASE"/>
    <property type="match status" value="1"/>
</dbReference>
<dbReference type="PANTHER" id="PTHR10889:SF1">
    <property type="entry name" value="DEOXYRIBOSE-PHOSPHATE ALDOLASE"/>
    <property type="match status" value="1"/>
</dbReference>
<dbReference type="Pfam" id="PF01791">
    <property type="entry name" value="DeoC"/>
    <property type="match status" value="1"/>
</dbReference>
<dbReference type="PIRSF" id="PIRSF001357">
    <property type="entry name" value="DeoC"/>
    <property type="match status" value="1"/>
</dbReference>
<dbReference type="SMART" id="SM01133">
    <property type="entry name" value="DeoC"/>
    <property type="match status" value="1"/>
</dbReference>
<dbReference type="SUPFAM" id="SSF51569">
    <property type="entry name" value="Aldolase"/>
    <property type="match status" value="1"/>
</dbReference>
<proteinExistence type="inferred from homology"/>
<organism>
    <name type="scientific">Bacillus anthracis (strain A0248)</name>
    <dbReference type="NCBI Taxonomy" id="592021"/>
    <lineage>
        <taxon>Bacteria</taxon>
        <taxon>Bacillati</taxon>
        <taxon>Bacillota</taxon>
        <taxon>Bacilli</taxon>
        <taxon>Bacillales</taxon>
        <taxon>Bacillaceae</taxon>
        <taxon>Bacillus</taxon>
        <taxon>Bacillus cereus group</taxon>
    </lineage>
</organism>
<gene>
    <name evidence="1" type="primary">deoC</name>
    <name type="ordered locus">BAA_1960</name>
</gene>
<comment type="function">
    <text evidence="1">Catalyzes a reversible aldol reaction between acetaldehyde and D-glyceraldehyde 3-phosphate to generate 2-deoxy-D-ribose 5-phosphate.</text>
</comment>
<comment type="catalytic activity">
    <reaction evidence="1">
        <text>2-deoxy-D-ribose 5-phosphate = D-glyceraldehyde 3-phosphate + acetaldehyde</text>
        <dbReference type="Rhea" id="RHEA:12821"/>
        <dbReference type="ChEBI" id="CHEBI:15343"/>
        <dbReference type="ChEBI" id="CHEBI:59776"/>
        <dbReference type="ChEBI" id="CHEBI:62877"/>
        <dbReference type="EC" id="4.1.2.4"/>
    </reaction>
</comment>
<comment type="pathway">
    <text evidence="1">Carbohydrate degradation; 2-deoxy-D-ribose 1-phosphate degradation; D-glyceraldehyde 3-phosphate and acetaldehyde from 2-deoxy-alpha-D-ribose 1-phosphate: step 2/2.</text>
</comment>
<comment type="subcellular location">
    <subcellularLocation>
        <location evidence="1">Cytoplasm</location>
    </subcellularLocation>
</comment>
<comment type="similarity">
    <text evidence="1">Belongs to the DeoC/FbaB aldolase family. DeoC type 1 subfamily.</text>
</comment>
<sequence>MNIAKLIDHTILKANTTKEDVMKVIEEAKEYKFASVCINPTWVKLAAEELAGHDVDVCTVIGFPLGASTTETKAFETKDAIAKGATEVDMVINVGALKDGDNELVEKDIYEVVQAAKGKALVKVIIETCLLTDEEKVRACELSVKAGADFVKTSTGFSTGGATAEDIALMRKTVGPNVGVKASGGVRTREDAEKMVAAGASRVGASASVAIVLNDAKGATDNY</sequence>
<protein>
    <recommendedName>
        <fullName evidence="1">Deoxyribose-phosphate aldolase</fullName>
        <shortName evidence="1">DERA</shortName>
        <ecNumber evidence="1">4.1.2.4</ecNumber>
    </recommendedName>
    <alternativeName>
        <fullName evidence="1">2-deoxy-D-ribose 5-phosphate aldolase</fullName>
    </alternativeName>
    <alternativeName>
        <fullName evidence="1">Phosphodeoxyriboaldolase</fullName>
        <shortName evidence="1">Deoxyriboaldolase</shortName>
    </alternativeName>
</protein>